<sequence length="430" mass="46475">MAVFPLSAKHRKYALRALAVSIILVSAAYIALTERTERVRPQRVEQNLPPLSWGGSGVQTAYWVQEAVQPGDSLADVLARSGMARDEIARITEKYGGEADLRHLRADQSVHVLVGGDGGAREVQFFTDEDGERNLVALEKKGGIWRRSASEADMKVLPTLRSVVVKTSARGSLARAEVPVEIRESLSGIFAGRFSLDGLKEGDAVRLIYDSLYFHGQQVAAGDILAAEVVKGGTRHQAFYYRSDKEGGGGGNYYDEDGRVLQEKGGFNIEPLVYTRISSPFGYRMHPILHTWRLHTGIDYAAPQGTPVRASADGVITFKGRKGGYGNAVMIRHANGVETLYAHLSAFSQAQGNVRGGEVIGFVGSTGRSTGPHLHYEARINGQPVNPVSVALPTPELTQADKAAFAAQKQKADALLARLRGIPVTVSQSD</sequence>
<dbReference type="EC" id="3.4.17.-" evidence="1"/>
<dbReference type="EC" id="3.4.24.-" evidence="1"/>
<dbReference type="EMBL" id="AEEF01000001">
    <property type="protein sequence ID" value="EFM05396.1"/>
    <property type="molecule type" value="Genomic_DNA"/>
</dbReference>
<dbReference type="RefSeq" id="WP_002212281.1">
    <property type="nucleotide sequence ID" value="NZ_GL397187.1"/>
</dbReference>
<dbReference type="PDB" id="3SLU">
    <property type="method" value="X-ray"/>
    <property type="resolution" value="2.41 A"/>
    <property type="chains" value="A/B=54-420"/>
</dbReference>
<dbReference type="PDBsum" id="3SLU"/>
<dbReference type="SMR" id="E0N688"/>
<dbReference type="HOGENOM" id="CLU_026846_4_1_4"/>
<dbReference type="EvolutionaryTrace" id="E0N688"/>
<dbReference type="Proteomes" id="UP000005526">
    <property type="component" value="Unassembled WGS sequence"/>
</dbReference>
<dbReference type="GO" id="GO:0009279">
    <property type="term" value="C:cell outer membrane"/>
    <property type="evidence" value="ECO:0007669"/>
    <property type="project" value="UniProtKB-SubCell"/>
</dbReference>
<dbReference type="GO" id="GO:0046872">
    <property type="term" value="F:metal ion binding"/>
    <property type="evidence" value="ECO:0007669"/>
    <property type="project" value="UniProtKB-KW"/>
</dbReference>
<dbReference type="GO" id="GO:0004222">
    <property type="term" value="F:metalloendopeptidase activity"/>
    <property type="evidence" value="ECO:0007669"/>
    <property type="project" value="TreeGrafter"/>
</dbReference>
<dbReference type="GO" id="GO:0071555">
    <property type="term" value="P:cell wall organization"/>
    <property type="evidence" value="ECO:0007669"/>
    <property type="project" value="UniProtKB-KW"/>
</dbReference>
<dbReference type="GO" id="GO:0006508">
    <property type="term" value="P:proteolysis"/>
    <property type="evidence" value="ECO:0007669"/>
    <property type="project" value="UniProtKB-KW"/>
</dbReference>
<dbReference type="CDD" id="cd12797">
    <property type="entry name" value="M23_peptidase"/>
    <property type="match status" value="1"/>
</dbReference>
<dbReference type="FunFam" id="2.70.70.10:FF:000002">
    <property type="entry name" value="Murein DD-endopeptidase MepM"/>
    <property type="match status" value="1"/>
</dbReference>
<dbReference type="Gene3D" id="3.10.450.350">
    <property type="match status" value="2"/>
</dbReference>
<dbReference type="Gene3D" id="2.70.70.10">
    <property type="entry name" value="Glucose Permease (Domain IIA)"/>
    <property type="match status" value="1"/>
</dbReference>
<dbReference type="InterPro" id="IPR050570">
    <property type="entry name" value="Cell_wall_metabolism_enzyme"/>
</dbReference>
<dbReference type="InterPro" id="IPR011055">
    <property type="entry name" value="Dup_hybrid_motif"/>
</dbReference>
<dbReference type="InterPro" id="IPR054512">
    <property type="entry name" value="NMB0315-like_N"/>
</dbReference>
<dbReference type="InterPro" id="IPR016047">
    <property type="entry name" value="Peptidase_M23"/>
</dbReference>
<dbReference type="PANTHER" id="PTHR21666:SF288">
    <property type="entry name" value="CELL DIVISION PROTEIN YTFB"/>
    <property type="match status" value="1"/>
</dbReference>
<dbReference type="PANTHER" id="PTHR21666">
    <property type="entry name" value="PEPTIDASE-RELATED"/>
    <property type="match status" value="1"/>
</dbReference>
<dbReference type="Pfam" id="PF22310">
    <property type="entry name" value="NMB0315_dom_I"/>
    <property type="match status" value="1"/>
</dbReference>
<dbReference type="Pfam" id="PF01551">
    <property type="entry name" value="Peptidase_M23"/>
    <property type="match status" value="1"/>
</dbReference>
<dbReference type="SUPFAM" id="SSF51261">
    <property type="entry name" value="Duplicated hybrid motif"/>
    <property type="match status" value="1"/>
</dbReference>
<name>MPG_NEIM3</name>
<organism>
    <name type="scientific">Neisseria meningitidis serogroup B (strain ATCC 13091 / M2091)</name>
    <dbReference type="NCBI Taxonomy" id="862513"/>
    <lineage>
        <taxon>Bacteria</taxon>
        <taxon>Pseudomonadati</taxon>
        <taxon>Pseudomonadota</taxon>
        <taxon>Betaproteobacteria</taxon>
        <taxon>Neisseriales</taxon>
        <taxon>Neisseriaceae</taxon>
        <taxon>Neisseria</taxon>
    </lineage>
</organism>
<gene>
    <name evidence="6" type="ORF">HMPREF0602_0018</name>
</gene>
<protein>
    <recommendedName>
        <fullName evidence="4">DD-carboxypeptidase/endopeptidase Mpg</fullName>
        <ecNumber evidence="1">3.4.17.-</ecNumber>
        <ecNumber evidence="1">3.4.24.-</ecNumber>
    </recommendedName>
    <alternativeName>
        <fullName evidence="1">Metalloprotease active against peptidoglycan</fullName>
    </alternativeName>
    <alternativeName>
        <fullName evidence="3">Outer membrane protein</fullName>
        <shortName evidence="3">OMP</shortName>
    </alternativeName>
    <alternativeName>
        <fullName evidence="4">Zinc metallopeptidase</fullName>
    </alternativeName>
    <alternativeName>
        <fullName evidence="4">Zinc metalloprotease</fullName>
    </alternativeName>
    <alternativeName>
        <fullName evidence="3">Zinc-dependent metallopeptidase</fullName>
    </alternativeName>
</protein>
<keyword id="KW-0002">3D-structure</keyword>
<keyword id="KW-0998">Cell outer membrane</keyword>
<keyword id="KW-0961">Cell wall biogenesis/degradation</keyword>
<keyword id="KW-1029">Fimbrium biogenesis</keyword>
<keyword id="KW-0378">Hydrolase</keyword>
<keyword id="KW-0472">Membrane</keyword>
<keyword id="KW-0479">Metal-binding</keyword>
<keyword id="KW-0482">Metalloprotease</keyword>
<keyword id="KW-0645">Protease</keyword>
<keyword id="KW-0862">Zinc</keyword>
<keyword id="KW-0865">Zymogen</keyword>
<proteinExistence type="evidence at protein level"/>
<reference evidence="6 7" key="1">
    <citation type="submission" date="2010-07" db="EMBL/GenBank/DDBJ databases">
        <authorList>
            <person name="Muzny D."/>
            <person name="Qin X."/>
            <person name="Deng J."/>
            <person name="Jiang H."/>
            <person name="Liu Y."/>
            <person name="Qu J."/>
            <person name="Song X.-Z."/>
            <person name="Zhang L."/>
            <person name="Thornton R."/>
            <person name="Coyle M."/>
            <person name="Francisco L."/>
            <person name="Jackson L."/>
            <person name="Javaid M."/>
            <person name="Korchina V."/>
            <person name="Kovar C."/>
            <person name="Mata R."/>
            <person name="Mathew T."/>
            <person name="Ngo R."/>
            <person name="Nguyen L."/>
            <person name="Nguyen N."/>
            <person name="Okwuonu G."/>
            <person name="Ongeri F."/>
            <person name="Pham C."/>
            <person name="Simmons D."/>
            <person name="Wilczek-Boney K."/>
            <person name="Hale W."/>
            <person name="Jakkamsetti A."/>
            <person name="Pham P."/>
            <person name="Ruth R."/>
            <person name="San Lucas F."/>
            <person name="Warren J."/>
            <person name="Zhang J."/>
            <person name="Zhao Z."/>
            <person name="Zhou C."/>
            <person name="Zhu D."/>
            <person name="Lee S."/>
            <person name="Bess C."/>
            <person name="Blankenburg K."/>
            <person name="Forbes L."/>
            <person name="Fu Q."/>
            <person name="Gubbala S."/>
            <person name="Hirani K."/>
            <person name="Jayaseelan J.C."/>
            <person name="Lara F."/>
            <person name="Munidasa M."/>
            <person name="Palculict T."/>
            <person name="Patil S."/>
            <person name="Pu L.-L."/>
            <person name="Saada N."/>
            <person name="Tang L."/>
            <person name="Weissenberger G."/>
            <person name="Zhu Y."/>
            <person name="Hemphill L."/>
            <person name="Shang Y."/>
            <person name="Youmans B."/>
            <person name="Ayvaz T."/>
            <person name="Ross M."/>
            <person name="Santibanez J."/>
            <person name="Aqrawi P."/>
            <person name="Gross S."/>
            <person name="Joshi V."/>
            <person name="Fowler G."/>
            <person name="Nazareth L."/>
            <person name="Reid J."/>
            <person name="Worley K."/>
            <person name="Petrosino J."/>
            <person name="Highlander S."/>
            <person name="Gibbs R."/>
        </authorList>
    </citation>
    <scope>NUCLEOTIDE SEQUENCE [LARGE SCALE GENOMIC DNA]</scope>
    <source>
        <strain evidence="6 7">ATCC 13091 / M2091</strain>
    </source>
</reference>
<reference evidence="8" key="2">
    <citation type="journal article" date="2011" name="PLoS ONE">
        <title>Crystal structure of outer membrane protein NMB0315 from Neisseria meningitidis.</title>
        <authorList>
            <person name="Wang X."/>
            <person name="Yang X."/>
            <person name="Yang C."/>
            <person name="Wu Z."/>
            <person name="Xu H."/>
            <person name="Shen Y."/>
        </authorList>
    </citation>
    <scope>X-RAY CRYSTALLOGRAPHY (2.41 ANGSTROMS) OF 54-420 IN COMPLEX WITH NICKEL</scope>
    <scope>COFACTOR</scope>
    <scope>SUBUNIT</scope>
    <scope>SUBCELLULAR LOCATION</scope>
    <scope>PTM</scope>
    <source>
        <strain evidence="3">ATCC 13091 / M2091</strain>
    </source>
</reference>
<comment type="function">
    <text evidence="1">Has both endopeptidase and DD-carboxypeptidase activities. Degrades cell wall peptidoglycan (PG) to allow consummate expression of pili.</text>
</comment>
<comment type="cofactor">
    <cofactor evidence="2">
        <name>Zn(2+)</name>
        <dbReference type="ChEBI" id="CHEBI:29105"/>
    </cofactor>
    <text evidence="2">Binds 1 zinc ion per subunit. Binds a divalent metal cation, probably Zn(2+) in vivo, Ni(2+) ion is found in the crystal structure.</text>
</comment>
<comment type="subunit">
    <text evidence="2">Monomer.</text>
</comment>
<comment type="subcellular location">
    <subcellularLocation>
        <location evidence="5">Cell outer membrane</location>
    </subcellularLocation>
    <text evidence="5">There is a signal or a transmembrane region in the N-terminus of the pre-protein (Probable). Mature protein is probably associated with the cell outer membrane (PubMed:22046377).</text>
</comment>
<comment type="PTM">
    <text evidence="5">Likely to be synthesized as a proenzyme. The cleavage of the N-terminal domain is probably required for the activation of the enzyme.</text>
</comment>
<comment type="similarity">
    <text evidence="3 4">Belongs to the peptidase M23B family.</text>
</comment>
<feature type="propeptide" id="PRO_0000461673" description="Removed in mature form" evidence="5">
    <location>
        <begin position="1"/>
        <end status="unknown"/>
    </location>
</feature>
<feature type="chain" id="PRO_0000461674" description="DD-carboxypeptidase/endopeptidase Mpg">
    <location>
        <begin status="unknown"/>
        <end position="430"/>
    </location>
</feature>
<feature type="binding site" evidence="5 8">
    <location>
        <position position="295"/>
    </location>
    <ligand>
        <name>Zn(2+)</name>
        <dbReference type="ChEBI" id="CHEBI:29105"/>
        <note>catalytic</note>
    </ligand>
</feature>
<feature type="binding site" evidence="5 8">
    <location>
        <position position="299"/>
    </location>
    <ligand>
        <name>Zn(2+)</name>
        <dbReference type="ChEBI" id="CHEBI:29105"/>
        <note>catalytic</note>
    </ligand>
</feature>
<feature type="binding site" evidence="5 8">
    <location>
        <position position="375"/>
    </location>
    <ligand>
        <name>Zn(2+)</name>
        <dbReference type="ChEBI" id="CHEBI:29105"/>
        <note>catalytic</note>
    </ligand>
</feature>
<feature type="strand" evidence="9">
    <location>
        <begin position="62"/>
        <end position="67"/>
    </location>
</feature>
<feature type="helix" evidence="9">
    <location>
        <begin position="74"/>
        <end position="80"/>
    </location>
</feature>
<feature type="helix" evidence="9">
    <location>
        <begin position="85"/>
        <end position="92"/>
    </location>
</feature>
<feature type="strand" evidence="9">
    <location>
        <begin position="99"/>
        <end position="101"/>
    </location>
</feature>
<feature type="strand" evidence="9">
    <location>
        <begin position="106"/>
        <end position="114"/>
    </location>
</feature>
<feature type="strand" evidence="9">
    <location>
        <begin position="120"/>
        <end position="127"/>
    </location>
</feature>
<feature type="strand" evidence="9">
    <location>
        <begin position="132"/>
        <end position="141"/>
    </location>
</feature>
<feature type="strand" evidence="9">
    <location>
        <begin position="144"/>
        <end position="147"/>
    </location>
</feature>
<feature type="helix" evidence="9">
    <location>
        <begin position="151"/>
        <end position="153"/>
    </location>
</feature>
<feature type="strand" evidence="9">
    <location>
        <begin position="154"/>
        <end position="164"/>
    </location>
</feature>
<feature type="helix" evidence="9">
    <location>
        <begin position="169"/>
        <end position="175"/>
    </location>
</feature>
<feature type="helix" evidence="9">
    <location>
        <begin position="180"/>
        <end position="190"/>
    </location>
</feature>
<feature type="turn" evidence="9">
    <location>
        <begin position="191"/>
        <end position="193"/>
    </location>
</feature>
<feature type="strand" evidence="9">
    <location>
        <begin position="204"/>
        <end position="214"/>
    </location>
</feature>
<feature type="strand" evidence="9">
    <location>
        <begin position="217"/>
        <end position="231"/>
    </location>
</feature>
<feature type="strand" evidence="9">
    <location>
        <begin position="234"/>
        <end position="241"/>
    </location>
</feature>
<feature type="strand" evidence="9">
    <location>
        <begin position="252"/>
        <end position="254"/>
    </location>
</feature>
<feature type="strand" evidence="9">
    <location>
        <begin position="275"/>
        <end position="279"/>
    </location>
</feature>
<feature type="strand" evidence="9">
    <location>
        <begin position="281"/>
        <end position="285"/>
    </location>
</feature>
<feature type="turn" evidence="9">
    <location>
        <begin position="287"/>
        <end position="289"/>
    </location>
</feature>
<feature type="strand" evidence="9">
    <location>
        <begin position="292"/>
        <end position="295"/>
    </location>
</feature>
<feature type="strand" evidence="9">
    <location>
        <begin position="297"/>
        <end position="301"/>
    </location>
</feature>
<feature type="strand" evidence="9">
    <location>
        <begin position="307"/>
        <end position="309"/>
    </location>
</feature>
<feature type="strand" evidence="9">
    <location>
        <begin position="311"/>
        <end position="321"/>
    </location>
</feature>
<feature type="helix" evidence="9">
    <location>
        <begin position="323"/>
        <end position="325"/>
    </location>
</feature>
<feature type="strand" evidence="9">
    <location>
        <begin position="327"/>
        <end position="332"/>
    </location>
</feature>
<feature type="strand" evidence="9">
    <location>
        <begin position="337"/>
        <end position="346"/>
    </location>
</feature>
<feature type="strand" evidence="9">
    <location>
        <begin position="356"/>
        <end position="362"/>
    </location>
</feature>
<feature type="strand" evidence="9">
    <location>
        <begin position="370"/>
        <end position="385"/>
    </location>
</feature>
<feature type="turn" evidence="9">
    <location>
        <begin position="388"/>
        <end position="390"/>
    </location>
</feature>
<feature type="helix" evidence="9">
    <location>
        <begin position="399"/>
        <end position="416"/>
    </location>
</feature>
<feature type="helix" evidence="9">
    <location>
        <begin position="417"/>
        <end position="419"/>
    </location>
</feature>
<accession>E0N688</accession>
<evidence type="ECO:0000250" key="1">
    <source>
        <dbReference type="UniProtKB" id="Q5F676"/>
    </source>
</evidence>
<evidence type="ECO:0000269" key="2">
    <source>
    </source>
</evidence>
<evidence type="ECO:0000303" key="3">
    <source>
    </source>
</evidence>
<evidence type="ECO:0000305" key="4"/>
<evidence type="ECO:0000305" key="5">
    <source>
    </source>
</evidence>
<evidence type="ECO:0000312" key="6">
    <source>
        <dbReference type="EMBL" id="EFM05396.1"/>
    </source>
</evidence>
<evidence type="ECO:0000312" key="7">
    <source>
        <dbReference type="Proteomes" id="UP000005526"/>
    </source>
</evidence>
<evidence type="ECO:0007744" key="8">
    <source>
        <dbReference type="PDB" id="3SLU"/>
    </source>
</evidence>
<evidence type="ECO:0007829" key="9">
    <source>
        <dbReference type="PDB" id="3SLU"/>
    </source>
</evidence>